<feature type="chain" id="PRO_1000025427" description="Argininosuccinate synthase">
    <location>
        <begin position="1"/>
        <end position="444"/>
    </location>
</feature>
<feature type="binding site" evidence="1">
    <location>
        <begin position="18"/>
        <end position="26"/>
    </location>
    <ligand>
        <name>ATP</name>
        <dbReference type="ChEBI" id="CHEBI:30616"/>
    </ligand>
</feature>
<feature type="binding site" evidence="1">
    <location>
        <position position="44"/>
    </location>
    <ligand>
        <name>ATP</name>
        <dbReference type="ChEBI" id="CHEBI:30616"/>
    </ligand>
</feature>
<feature type="binding site" evidence="1">
    <location>
        <position position="100"/>
    </location>
    <ligand>
        <name>L-citrulline</name>
        <dbReference type="ChEBI" id="CHEBI:57743"/>
    </ligand>
</feature>
<feature type="binding site" evidence="1">
    <location>
        <position position="130"/>
    </location>
    <ligand>
        <name>ATP</name>
        <dbReference type="ChEBI" id="CHEBI:30616"/>
    </ligand>
</feature>
<feature type="binding site" evidence="1">
    <location>
        <position position="132"/>
    </location>
    <ligand>
        <name>ATP</name>
        <dbReference type="ChEBI" id="CHEBI:30616"/>
    </ligand>
</feature>
<feature type="binding site" evidence="1">
    <location>
        <position position="132"/>
    </location>
    <ligand>
        <name>L-aspartate</name>
        <dbReference type="ChEBI" id="CHEBI:29991"/>
    </ligand>
</feature>
<feature type="binding site" evidence="1">
    <location>
        <position position="136"/>
    </location>
    <ligand>
        <name>L-aspartate</name>
        <dbReference type="ChEBI" id="CHEBI:29991"/>
    </ligand>
</feature>
<feature type="binding site" evidence="1">
    <location>
        <position position="136"/>
    </location>
    <ligand>
        <name>L-citrulline</name>
        <dbReference type="ChEBI" id="CHEBI:57743"/>
    </ligand>
</feature>
<feature type="binding site" evidence="1">
    <location>
        <position position="137"/>
    </location>
    <ligand>
        <name>ATP</name>
        <dbReference type="ChEBI" id="CHEBI:30616"/>
    </ligand>
</feature>
<feature type="binding site" evidence="1">
    <location>
        <position position="137"/>
    </location>
    <ligand>
        <name>L-aspartate</name>
        <dbReference type="ChEBI" id="CHEBI:29991"/>
    </ligand>
</feature>
<feature type="binding site" evidence="1">
    <location>
        <position position="140"/>
    </location>
    <ligand>
        <name>L-citrulline</name>
        <dbReference type="ChEBI" id="CHEBI:57743"/>
    </ligand>
</feature>
<feature type="binding site" evidence="1">
    <location>
        <position position="193"/>
    </location>
    <ligand>
        <name>L-citrulline</name>
        <dbReference type="ChEBI" id="CHEBI:57743"/>
    </ligand>
</feature>
<feature type="binding site" evidence="1">
    <location>
        <position position="195"/>
    </location>
    <ligand>
        <name>ATP</name>
        <dbReference type="ChEBI" id="CHEBI:30616"/>
    </ligand>
</feature>
<feature type="binding site" evidence="1">
    <location>
        <position position="202"/>
    </location>
    <ligand>
        <name>L-citrulline</name>
        <dbReference type="ChEBI" id="CHEBI:57743"/>
    </ligand>
</feature>
<feature type="binding site" evidence="1">
    <location>
        <position position="204"/>
    </location>
    <ligand>
        <name>L-citrulline</name>
        <dbReference type="ChEBI" id="CHEBI:57743"/>
    </ligand>
</feature>
<feature type="binding site" evidence="1">
    <location>
        <position position="281"/>
    </location>
    <ligand>
        <name>L-citrulline</name>
        <dbReference type="ChEBI" id="CHEBI:57743"/>
    </ligand>
</feature>
<evidence type="ECO:0000255" key="1">
    <source>
        <dbReference type="HAMAP-Rule" id="MF_00581"/>
    </source>
</evidence>
<keyword id="KW-0028">Amino-acid biosynthesis</keyword>
<keyword id="KW-0055">Arginine biosynthesis</keyword>
<keyword id="KW-0067">ATP-binding</keyword>
<keyword id="KW-0963">Cytoplasm</keyword>
<keyword id="KW-0436">Ligase</keyword>
<keyword id="KW-0547">Nucleotide-binding</keyword>
<gene>
    <name evidence="1" type="primary">argG</name>
    <name type="ordered locus">CGSHiGG_02370</name>
</gene>
<organism>
    <name type="scientific">Haemophilus influenzae (strain PittGG)</name>
    <dbReference type="NCBI Taxonomy" id="374931"/>
    <lineage>
        <taxon>Bacteria</taxon>
        <taxon>Pseudomonadati</taxon>
        <taxon>Pseudomonadota</taxon>
        <taxon>Gammaproteobacteria</taxon>
        <taxon>Pasteurellales</taxon>
        <taxon>Pasteurellaceae</taxon>
        <taxon>Haemophilus</taxon>
    </lineage>
</organism>
<protein>
    <recommendedName>
        <fullName evidence="1">Argininosuccinate synthase</fullName>
        <ecNumber evidence="1">6.3.4.5</ecNumber>
    </recommendedName>
    <alternativeName>
        <fullName evidence="1">Citrulline--aspartate ligase</fullName>
    </alternativeName>
</protein>
<reference key="1">
    <citation type="journal article" date="2007" name="Genome Biol.">
        <title>Characterization and modeling of the Haemophilus influenzae core and supragenomes based on the complete genomic sequences of Rd and 12 clinical nontypeable strains.</title>
        <authorList>
            <person name="Hogg J.S."/>
            <person name="Hu F.Z."/>
            <person name="Janto B."/>
            <person name="Boissy R."/>
            <person name="Hayes J."/>
            <person name="Keefe R."/>
            <person name="Post J.C."/>
            <person name="Ehrlich G.D."/>
        </authorList>
    </citation>
    <scope>NUCLEOTIDE SEQUENCE [LARGE SCALE GENOMIC DNA]</scope>
    <source>
        <strain>PittGG</strain>
    </source>
</reference>
<comment type="catalytic activity">
    <reaction evidence="1">
        <text>L-citrulline + L-aspartate + ATP = 2-(N(omega)-L-arginino)succinate + AMP + diphosphate + H(+)</text>
        <dbReference type="Rhea" id="RHEA:10932"/>
        <dbReference type="ChEBI" id="CHEBI:15378"/>
        <dbReference type="ChEBI" id="CHEBI:29991"/>
        <dbReference type="ChEBI" id="CHEBI:30616"/>
        <dbReference type="ChEBI" id="CHEBI:33019"/>
        <dbReference type="ChEBI" id="CHEBI:57472"/>
        <dbReference type="ChEBI" id="CHEBI:57743"/>
        <dbReference type="ChEBI" id="CHEBI:456215"/>
        <dbReference type="EC" id="6.3.4.5"/>
    </reaction>
</comment>
<comment type="pathway">
    <text evidence="1">Amino-acid biosynthesis; L-arginine biosynthesis; L-arginine from L-ornithine and carbamoyl phosphate: step 2/3.</text>
</comment>
<comment type="subunit">
    <text evidence="1">Homotetramer.</text>
</comment>
<comment type="subcellular location">
    <subcellularLocation>
        <location evidence="1">Cytoplasm</location>
    </subcellularLocation>
</comment>
<comment type="similarity">
    <text evidence="1">Belongs to the argininosuccinate synthase family. Type 2 subfamily.</text>
</comment>
<dbReference type="EC" id="6.3.4.5" evidence="1"/>
<dbReference type="EMBL" id="CP000672">
    <property type="protein sequence ID" value="ABQ99513.1"/>
    <property type="molecule type" value="Genomic_DNA"/>
</dbReference>
<dbReference type="SMR" id="A5UFF8"/>
<dbReference type="KEGG" id="hiq:CGSHiGG_02370"/>
<dbReference type="HOGENOM" id="CLU_032784_4_1_6"/>
<dbReference type="UniPathway" id="UPA00068">
    <property type="reaction ID" value="UER00113"/>
</dbReference>
<dbReference type="Proteomes" id="UP000001990">
    <property type="component" value="Chromosome"/>
</dbReference>
<dbReference type="GO" id="GO:0005737">
    <property type="term" value="C:cytoplasm"/>
    <property type="evidence" value="ECO:0007669"/>
    <property type="project" value="UniProtKB-SubCell"/>
</dbReference>
<dbReference type="GO" id="GO:0004055">
    <property type="term" value="F:argininosuccinate synthase activity"/>
    <property type="evidence" value="ECO:0007669"/>
    <property type="project" value="UniProtKB-UniRule"/>
</dbReference>
<dbReference type="GO" id="GO:0005524">
    <property type="term" value="F:ATP binding"/>
    <property type="evidence" value="ECO:0007669"/>
    <property type="project" value="UniProtKB-UniRule"/>
</dbReference>
<dbReference type="GO" id="GO:0042803">
    <property type="term" value="F:protein homodimerization activity"/>
    <property type="evidence" value="ECO:0007669"/>
    <property type="project" value="InterPro"/>
</dbReference>
<dbReference type="GO" id="GO:0000053">
    <property type="term" value="P:argininosuccinate metabolic process"/>
    <property type="evidence" value="ECO:0007669"/>
    <property type="project" value="TreeGrafter"/>
</dbReference>
<dbReference type="GO" id="GO:0006526">
    <property type="term" value="P:L-arginine biosynthetic process"/>
    <property type="evidence" value="ECO:0007669"/>
    <property type="project" value="UniProtKB-UniRule"/>
</dbReference>
<dbReference type="GO" id="GO:0000050">
    <property type="term" value="P:urea cycle"/>
    <property type="evidence" value="ECO:0007669"/>
    <property type="project" value="TreeGrafter"/>
</dbReference>
<dbReference type="CDD" id="cd01999">
    <property type="entry name" value="ASS"/>
    <property type="match status" value="1"/>
</dbReference>
<dbReference type="FunFam" id="1.10.287.400:FF:000001">
    <property type="entry name" value="Argininosuccinate synthase"/>
    <property type="match status" value="1"/>
</dbReference>
<dbReference type="Gene3D" id="1.10.287.400">
    <property type="match status" value="1"/>
</dbReference>
<dbReference type="Gene3D" id="3.90.1260.10">
    <property type="entry name" value="Argininosuccinate synthetase, chain A, domain 2"/>
    <property type="match status" value="1"/>
</dbReference>
<dbReference type="Gene3D" id="3.40.50.620">
    <property type="entry name" value="HUPs"/>
    <property type="match status" value="1"/>
</dbReference>
<dbReference type="HAMAP" id="MF_00581">
    <property type="entry name" value="Arg_succ_synth_type2"/>
    <property type="match status" value="1"/>
</dbReference>
<dbReference type="InterPro" id="IPR023437">
    <property type="entry name" value="Arg_succ_synth_type2_subfam"/>
</dbReference>
<dbReference type="InterPro" id="IPR048268">
    <property type="entry name" value="Arginosuc_syn_C"/>
</dbReference>
<dbReference type="InterPro" id="IPR048267">
    <property type="entry name" value="Arginosuc_syn_N"/>
</dbReference>
<dbReference type="InterPro" id="IPR001518">
    <property type="entry name" value="Arginosuc_synth"/>
</dbReference>
<dbReference type="InterPro" id="IPR018223">
    <property type="entry name" value="Arginosuc_synth_CS"/>
</dbReference>
<dbReference type="InterPro" id="IPR023434">
    <property type="entry name" value="Arginosuc_synth_type_1_subfam"/>
</dbReference>
<dbReference type="InterPro" id="IPR024074">
    <property type="entry name" value="AS_cat/multimer_dom_body"/>
</dbReference>
<dbReference type="InterPro" id="IPR024073">
    <property type="entry name" value="AS_multimer_C_tail"/>
</dbReference>
<dbReference type="InterPro" id="IPR014729">
    <property type="entry name" value="Rossmann-like_a/b/a_fold"/>
</dbReference>
<dbReference type="NCBIfam" id="TIGR00032">
    <property type="entry name" value="argG"/>
    <property type="match status" value="1"/>
</dbReference>
<dbReference type="NCBIfam" id="NF003779">
    <property type="entry name" value="PRK05370.1"/>
    <property type="match status" value="1"/>
</dbReference>
<dbReference type="PANTHER" id="PTHR11587">
    <property type="entry name" value="ARGININOSUCCINATE SYNTHASE"/>
    <property type="match status" value="1"/>
</dbReference>
<dbReference type="PANTHER" id="PTHR11587:SF2">
    <property type="entry name" value="ARGININOSUCCINATE SYNTHASE"/>
    <property type="match status" value="1"/>
</dbReference>
<dbReference type="Pfam" id="PF20979">
    <property type="entry name" value="Arginosuc_syn_C"/>
    <property type="match status" value="1"/>
</dbReference>
<dbReference type="Pfam" id="PF00764">
    <property type="entry name" value="Arginosuc_synth"/>
    <property type="match status" value="1"/>
</dbReference>
<dbReference type="SUPFAM" id="SSF52402">
    <property type="entry name" value="Adenine nucleotide alpha hydrolases-like"/>
    <property type="match status" value="1"/>
</dbReference>
<dbReference type="SUPFAM" id="SSF69864">
    <property type="entry name" value="Argininosuccinate synthetase, C-terminal domain"/>
    <property type="match status" value="1"/>
</dbReference>
<dbReference type="PROSITE" id="PS00564">
    <property type="entry name" value="ARGININOSUCCIN_SYN_1"/>
    <property type="match status" value="1"/>
</dbReference>
<dbReference type="PROSITE" id="PS00565">
    <property type="entry name" value="ARGININOSUCCIN_SYN_2"/>
    <property type="match status" value="1"/>
</dbReference>
<name>ASSY_HAEIG</name>
<sequence length="444" mass="49289">MSNTILQNLPKGQKVGIAFSGGLDTSAALLWMRQKGAVPYAYTANLGQPDEDDYNAIPKKAMAYGAENARLIDCRAQLAHEGIAAIQCGAFHISTGGIPYFNTTPLGRAVTGTMLVAAMKEDDVNIWGDGSTFKGNDIERFYRYGLLTNPNLKIYKPWLDVQFIEELGGRLEMSQFLIENGFDYKMSVEKAYSTDSNMLGATHEAKDLEQLSTGMKIVKPIMGVAFWDEKVEIKPETVTVTFEDGVPVALNGKHFDNAVDLILEANRIGGRHGLGMSDQIENRIIEAKSRGIYEAPGMALLHIAYERLVTGIHNEDTIEQYRINGIRLGRLLYQGRWFDPQALMLRETAQRWVAKAITGTVTLELRRGNDFTILNTESPNLTYEAERLSMEKVEDAPFDPIDRIGQLTMRNLDVSDTRGKLGIYAQTGLLSAIKDSVLPQLGKK</sequence>
<proteinExistence type="inferred from homology"/>
<accession>A5UFF8</accession>